<name>ESI3_THIEL</name>
<accession>P68178</accession>
<accession>Q42509</accession>
<sequence length="54" mass="5936">MGSATVLEVILAIILPPVGVFLRYKLGVEFWICLLLTILGYIPGIIYAVYVLVV</sequence>
<dbReference type="EMBL" id="U00966">
    <property type="protein sequence ID" value="AAA21847.1"/>
    <property type="molecule type" value="Genomic_DNA"/>
</dbReference>
<dbReference type="SMR" id="P68178"/>
<dbReference type="TCDB" id="9.B.12.1.1">
    <property type="family name" value="the sensitivity to sodium or salt stress-induced hydrophobic peptide (sna) family"/>
</dbReference>
<dbReference type="GO" id="GO:0016020">
    <property type="term" value="C:membrane"/>
    <property type="evidence" value="ECO:0007669"/>
    <property type="project" value="UniProtKB-SubCell"/>
</dbReference>
<dbReference type="InterPro" id="IPR000612">
    <property type="entry name" value="PMP3"/>
</dbReference>
<dbReference type="PANTHER" id="PTHR21659">
    <property type="entry name" value="HYDROPHOBIC PROTEIN RCI2 LOW TEMPERATURE AND SALT RESPONSIVE PROTEIN LTI6 -RELATED"/>
    <property type="match status" value="1"/>
</dbReference>
<dbReference type="PANTHER" id="PTHR21659:SF117">
    <property type="entry name" value="OS03G0286900 PROTEIN"/>
    <property type="match status" value="1"/>
</dbReference>
<dbReference type="Pfam" id="PF01679">
    <property type="entry name" value="Pmp3"/>
    <property type="match status" value="1"/>
</dbReference>
<dbReference type="PROSITE" id="PS01309">
    <property type="entry name" value="UPF0057"/>
    <property type="match status" value="1"/>
</dbReference>
<keyword id="KW-0472">Membrane</keyword>
<keyword id="KW-0346">Stress response</keyword>
<keyword id="KW-0812">Transmembrane</keyword>
<keyword id="KW-1133">Transmembrane helix</keyword>
<proteinExistence type="evidence at transcript level"/>
<evidence type="ECO:0000255" key="1"/>
<evidence type="ECO:0000269" key="2">
    <source>
    </source>
</evidence>
<evidence type="ECO:0000305" key="3"/>
<feature type="chain" id="PRO_0000193980" description="Salt stress-induced hydrophobic peptide ESI3">
    <location>
        <begin position="1"/>
        <end position="54"/>
    </location>
</feature>
<feature type="transmembrane region" description="Helical" evidence="1">
    <location>
        <begin position="2"/>
        <end position="22"/>
    </location>
</feature>
<feature type="transmembrane region" description="Helical" evidence="1">
    <location>
        <begin position="34"/>
        <end position="54"/>
    </location>
</feature>
<comment type="subcellular location">
    <subcellularLocation>
        <location evidence="3">Membrane</location>
        <topology evidence="3">Multi-pass membrane protein</topology>
    </subcellularLocation>
</comment>
<comment type="induction">
    <text evidence="2">By salt stress.</text>
</comment>
<comment type="similarity">
    <text evidence="3">Belongs to the UPF0057 (PMP3) family.</text>
</comment>
<reference key="1">
    <citation type="journal article" date="1994" name="Plant Physiol.">
        <title>ESI3, a stress-induced gene from Lophopyrum elongatum.</title>
        <authorList>
            <person name="Gulick P.J."/>
            <person name="Shen W."/>
            <person name="An H."/>
        </authorList>
    </citation>
    <scope>NUCLEOTIDE SEQUENCE [GENOMIC DNA]</scope>
    <scope>INDUCTION</scope>
    <source>
        <tissue>Root</tissue>
    </source>
</reference>
<gene>
    <name type="primary">ESI3</name>
</gene>
<protein>
    <recommendedName>
        <fullName>Salt stress-induced hydrophobic peptide ESI3</fullName>
    </recommendedName>
</protein>
<organism>
    <name type="scientific">Thinopyrum elongatum</name>
    <name type="common">Tall wheatgrass</name>
    <name type="synonym">Elymus elongatus</name>
    <dbReference type="NCBI Taxonomy" id="4588"/>
    <lineage>
        <taxon>Eukaryota</taxon>
        <taxon>Viridiplantae</taxon>
        <taxon>Streptophyta</taxon>
        <taxon>Embryophyta</taxon>
        <taxon>Tracheophyta</taxon>
        <taxon>Spermatophyta</taxon>
        <taxon>Magnoliopsida</taxon>
        <taxon>Liliopsida</taxon>
        <taxon>Poales</taxon>
        <taxon>Poaceae</taxon>
        <taxon>BOP clade</taxon>
        <taxon>Pooideae</taxon>
        <taxon>Triticodae</taxon>
        <taxon>Triticeae</taxon>
        <taxon>Triticinae</taxon>
        <taxon>Thinopyrum</taxon>
    </lineage>
</organism>